<sequence length="336" mass="36113">MKFVDEATLIVQSGDGGRGCVSFRRERFIPRGGPDGGNGGKGGDVVLVATRAKHTLYHFRYKHRFQAQRGGYGSGANRHGKNGEDLLIEVPVGTIVRDAETSEIIADLSVEEERCIVCHGGRGGKGNKHFTSSTYRAPRFAQDGEEGEEKTLKLELKLLADVGLVGLPNAGKSSLITALTAARPKIGAYPFTTLAPSLGVLQDPYGEPVVIADIPGLIEGAAQGAGLGHRFLRHIERNRLLIHLIDASQVTAEDPLASYQAINKELSSYDQALGEKPQIVVLNKMDLPEAEEGACLFKQSCGNLQVLQISAILGEGLDELIEAIFAQLREPGRRPS</sequence>
<dbReference type="EC" id="3.6.5.-" evidence="1"/>
<dbReference type="EMBL" id="CP001322">
    <property type="protein sequence ID" value="ACL05801.1"/>
    <property type="molecule type" value="Genomic_DNA"/>
</dbReference>
<dbReference type="RefSeq" id="WP_015948849.1">
    <property type="nucleotide sequence ID" value="NC_011768.1"/>
</dbReference>
<dbReference type="SMR" id="B8FM68"/>
<dbReference type="KEGG" id="dal:Dalk_4116"/>
<dbReference type="eggNOG" id="COG0536">
    <property type="taxonomic scope" value="Bacteria"/>
</dbReference>
<dbReference type="HOGENOM" id="CLU_011747_2_3_7"/>
<dbReference type="Proteomes" id="UP000000739">
    <property type="component" value="Chromosome"/>
</dbReference>
<dbReference type="GO" id="GO:0005737">
    <property type="term" value="C:cytoplasm"/>
    <property type="evidence" value="ECO:0007669"/>
    <property type="project" value="UniProtKB-SubCell"/>
</dbReference>
<dbReference type="GO" id="GO:0005525">
    <property type="term" value="F:GTP binding"/>
    <property type="evidence" value="ECO:0007669"/>
    <property type="project" value="UniProtKB-UniRule"/>
</dbReference>
<dbReference type="GO" id="GO:0003924">
    <property type="term" value="F:GTPase activity"/>
    <property type="evidence" value="ECO:0007669"/>
    <property type="project" value="UniProtKB-UniRule"/>
</dbReference>
<dbReference type="GO" id="GO:0000287">
    <property type="term" value="F:magnesium ion binding"/>
    <property type="evidence" value="ECO:0007669"/>
    <property type="project" value="InterPro"/>
</dbReference>
<dbReference type="GO" id="GO:0042254">
    <property type="term" value="P:ribosome biogenesis"/>
    <property type="evidence" value="ECO:0007669"/>
    <property type="project" value="UniProtKB-UniRule"/>
</dbReference>
<dbReference type="CDD" id="cd01898">
    <property type="entry name" value="Obg"/>
    <property type="match status" value="1"/>
</dbReference>
<dbReference type="FunFam" id="2.70.210.12:FF:000001">
    <property type="entry name" value="GTPase Obg"/>
    <property type="match status" value="1"/>
</dbReference>
<dbReference type="Gene3D" id="2.70.210.12">
    <property type="entry name" value="GTP1/OBG domain"/>
    <property type="match status" value="1"/>
</dbReference>
<dbReference type="Gene3D" id="3.40.50.300">
    <property type="entry name" value="P-loop containing nucleotide triphosphate hydrolases"/>
    <property type="match status" value="1"/>
</dbReference>
<dbReference type="HAMAP" id="MF_01454">
    <property type="entry name" value="GTPase_Obg"/>
    <property type="match status" value="1"/>
</dbReference>
<dbReference type="InterPro" id="IPR031167">
    <property type="entry name" value="G_OBG"/>
</dbReference>
<dbReference type="InterPro" id="IPR006073">
    <property type="entry name" value="GTP-bd"/>
</dbReference>
<dbReference type="InterPro" id="IPR014100">
    <property type="entry name" value="GTP-bd_Obg/CgtA"/>
</dbReference>
<dbReference type="InterPro" id="IPR006074">
    <property type="entry name" value="GTP1-OBG_CS"/>
</dbReference>
<dbReference type="InterPro" id="IPR006169">
    <property type="entry name" value="GTP1_OBG_dom"/>
</dbReference>
<dbReference type="InterPro" id="IPR036726">
    <property type="entry name" value="GTP1_OBG_dom_sf"/>
</dbReference>
<dbReference type="InterPro" id="IPR045086">
    <property type="entry name" value="OBG_GTPase"/>
</dbReference>
<dbReference type="InterPro" id="IPR027417">
    <property type="entry name" value="P-loop_NTPase"/>
</dbReference>
<dbReference type="NCBIfam" id="TIGR02729">
    <property type="entry name" value="Obg_CgtA"/>
    <property type="match status" value="1"/>
</dbReference>
<dbReference type="NCBIfam" id="NF008954">
    <property type="entry name" value="PRK12296.1"/>
    <property type="match status" value="1"/>
</dbReference>
<dbReference type="NCBIfam" id="NF008955">
    <property type="entry name" value="PRK12297.1"/>
    <property type="match status" value="1"/>
</dbReference>
<dbReference type="NCBIfam" id="NF008956">
    <property type="entry name" value="PRK12299.1"/>
    <property type="match status" value="1"/>
</dbReference>
<dbReference type="PANTHER" id="PTHR11702">
    <property type="entry name" value="DEVELOPMENTALLY REGULATED GTP-BINDING PROTEIN-RELATED"/>
    <property type="match status" value="1"/>
</dbReference>
<dbReference type="PANTHER" id="PTHR11702:SF31">
    <property type="entry name" value="MITOCHONDRIAL RIBOSOME-ASSOCIATED GTPASE 2"/>
    <property type="match status" value="1"/>
</dbReference>
<dbReference type="Pfam" id="PF01018">
    <property type="entry name" value="GTP1_OBG"/>
    <property type="match status" value="1"/>
</dbReference>
<dbReference type="Pfam" id="PF01926">
    <property type="entry name" value="MMR_HSR1"/>
    <property type="match status" value="1"/>
</dbReference>
<dbReference type="PIRSF" id="PIRSF002401">
    <property type="entry name" value="GTP_bd_Obg/CgtA"/>
    <property type="match status" value="1"/>
</dbReference>
<dbReference type="PRINTS" id="PR00326">
    <property type="entry name" value="GTP1OBG"/>
</dbReference>
<dbReference type="SUPFAM" id="SSF82051">
    <property type="entry name" value="Obg GTP-binding protein N-terminal domain"/>
    <property type="match status" value="1"/>
</dbReference>
<dbReference type="SUPFAM" id="SSF52540">
    <property type="entry name" value="P-loop containing nucleoside triphosphate hydrolases"/>
    <property type="match status" value="1"/>
</dbReference>
<dbReference type="PROSITE" id="PS51710">
    <property type="entry name" value="G_OBG"/>
    <property type="match status" value="1"/>
</dbReference>
<dbReference type="PROSITE" id="PS00905">
    <property type="entry name" value="GTP1_OBG"/>
    <property type="match status" value="1"/>
</dbReference>
<dbReference type="PROSITE" id="PS51883">
    <property type="entry name" value="OBG"/>
    <property type="match status" value="1"/>
</dbReference>
<accession>B8FM68</accession>
<keyword id="KW-0963">Cytoplasm</keyword>
<keyword id="KW-0342">GTP-binding</keyword>
<keyword id="KW-0378">Hydrolase</keyword>
<keyword id="KW-0460">Magnesium</keyword>
<keyword id="KW-0479">Metal-binding</keyword>
<keyword id="KW-0547">Nucleotide-binding</keyword>
<keyword id="KW-1185">Reference proteome</keyword>
<feature type="chain" id="PRO_0000385881" description="GTPase Obg">
    <location>
        <begin position="1"/>
        <end position="336"/>
    </location>
</feature>
<feature type="domain" description="Obg" evidence="2">
    <location>
        <begin position="1"/>
        <end position="159"/>
    </location>
</feature>
<feature type="domain" description="OBG-type G" evidence="1">
    <location>
        <begin position="160"/>
        <end position="329"/>
    </location>
</feature>
<feature type="binding site" evidence="1">
    <location>
        <begin position="166"/>
        <end position="173"/>
    </location>
    <ligand>
        <name>GTP</name>
        <dbReference type="ChEBI" id="CHEBI:37565"/>
    </ligand>
</feature>
<feature type="binding site" evidence="1">
    <location>
        <position position="173"/>
    </location>
    <ligand>
        <name>Mg(2+)</name>
        <dbReference type="ChEBI" id="CHEBI:18420"/>
    </ligand>
</feature>
<feature type="binding site" evidence="1">
    <location>
        <begin position="191"/>
        <end position="195"/>
    </location>
    <ligand>
        <name>GTP</name>
        <dbReference type="ChEBI" id="CHEBI:37565"/>
    </ligand>
</feature>
<feature type="binding site" evidence="1">
    <location>
        <position position="193"/>
    </location>
    <ligand>
        <name>Mg(2+)</name>
        <dbReference type="ChEBI" id="CHEBI:18420"/>
    </ligand>
</feature>
<feature type="binding site" evidence="1">
    <location>
        <begin position="213"/>
        <end position="216"/>
    </location>
    <ligand>
        <name>GTP</name>
        <dbReference type="ChEBI" id="CHEBI:37565"/>
    </ligand>
</feature>
<feature type="binding site" evidence="1">
    <location>
        <begin position="283"/>
        <end position="286"/>
    </location>
    <ligand>
        <name>GTP</name>
        <dbReference type="ChEBI" id="CHEBI:37565"/>
    </ligand>
</feature>
<feature type="binding site" evidence="1">
    <location>
        <begin position="310"/>
        <end position="312"/>
    </location>
    <ligand>
        <name>GTP</name>
        <dbReference type="ChEBI" id="CHEBI:37565"/>
    </ligand>
</feature>
<protein>
    <recommendedName>
        <fullName evidence="1">GTPase Obg</fullName>
        <ecNumber evidence="1">3.6.5.-</ecNumber>
    </recommendedName>
    <alternativeName>
        <fullName evidence="1">GTP-binding protein Obg</fullName>
    </alternativeName>
</protein>
<gene>
    <name evidence="1" type="primary">obg</name>
    <name type="ordered locus">Dalk_4116</name>
</gene>
<organism>
    <name type="scientific">Desulfatibacillum aliphaticivorans</name>
    <dbReference type="NCBI Taxonomy" id="218208"/>
    <lineage>
        <taxon>Bacteria</taxon>
        <taxon>Pseudomonadati</taxon>
        <taxon>Thermodesulfobacteriota</taxon>
        <taxon>Desulfobacteria</taxon>
        <taxon>Desulfobacterales</taxon>
        <taxon>Desulfatibacillaceae</taxon>
        <taxon>Desulfatibacillum</taxon>
    </lineage>
</organism>
<comment type="function">
    <text evidence="1">An essential GTPase which binds GTP, GDP and possibly (p)ppGpp with moderate affinity, with high nucleotide exchange rates and a fairly low GTP hydrolysis rate. Plays a role in control of the cell cycle, stress response, ribosome biogenesis and in those bacteria that undergo differentiation, in morphogenesis control.</text>
</comment>
<comment type="cofactor">
    <cofactor evidence="1">
        <name>Mg(2+)</name>
        <dbReference type="ChEBI" id="CHEBI:18420"/>
    </cofactor>
</comment>
<comment type="subunit">
    <text evidence="1">Monomer.</text>
</comment>
<comment type="subcellular location">
    <subcellularLocation>
        <location evidence="1">Cytoplasm</location>
    </subcellularLocation>
</comment>
<comment type="similarity">
    <text evidence="1">Belongs to the TRAFAC class OBG-HflX-like GTPase superfamily. OBG GTPase family.</text>
</comment>
<proteinExistence type="inferred from homology"/>
<name>OBG_DESAL</name>
<reference key="1">
    <citation type="journal article" date="2012" name="Environ. Microbiol.">
        <title>The genome sequence of Desulfatibacillum alkenivorans AK-01: a blueprint for anaerobic alkane oxidation.</title>
        <authorList>
            <person name="Callaghan A.V."/>
            <person name="Morris B.E."/>
            <person name="Pereira I.A."/>
            <person name="McInerney M.J."/>
            <person name="Austin R.N."/>
            <person name="Groves J.T."/>
            <person name="Kukor J.J."/>
            <person name="Suflita J.M."/>
            <person name="Young L.Y."/>
            <person name="Zylstra G.J."/>
            <person name="Wawrik B."/>
        </authorList>
    </citation>
    <scope>NUCLEOTIDE SEQUENCE [LARGE SCALE GENOMIC DNA]</scope>
    <source>
        <strain>AK-01</strain>
    </source>
</reference>
<evidence type="ECO:0000255" key="1">
    <source>
        <dbReference type="HAMAP-Rule" id="MF_01454"/>
    </source>
</evidence>
<evidence type="ECO:0000255" key="2">
    <source>
        <dbReference type="PROSITE-ProRule" id="PRU01231"/>
    </source>
</evidence>